<name>Y1316_METTH</name>
<keyword id="KW-1185">Reference proteome</keyword>
<dbReference type="EMBL" id="AE000666">
    <property type="protein sequence ID" value="AAB85794.1"/>
    <property type="molecule type" value="Genomic_DNA"/>
</dbReference>
<dbReference type="PIR" id="H69041">
    <property type="entry name" value="H69041"/>
</dbReference>
<dbReference type="RefSeq" id="WP_010876929.1">
    <property type="nucleotide sequence ID" value="NC_000916.1"/>
</dbReference>
<dbReference type="SMR" id="O27371"/>
<dbReference type="STRING" id="187420.MTH_1316"/>
<dbReference type="PaxDb" id="187420-MTH_1316"/>
<dbReference type="EnsemblBacteria" id="AAB85794">
    <property type="protein sequence ID" value="AAB85794"/>
    <property type="gene ID" value="MTH_1316"/>
</dbReference>
<dbReference type="GeneID" id="1471033"/>
<dbReference type="KEGG" id="mth:MTH_1316"/>
<dbReference type="PATRIC" id="fig|187420.15.peg.1285"/>
<dbReference type="HOGENOM" id="CLU_095956_1_0_2"/>
<dbReference type="InParanoid" id="O27371"/>
<dbReference type="Proteomes" id="UP000005223">
    <property type="component" value="Chromosome"/>
</dbReference>
<dbReference type="Gene3D" id="3.30.2170.10">
    <property type="entry name" value="archaeoglobus fulgidus dsm 4304 superfamily"/>
    <property type="match status" value="1"/>
</dbReference>
<dbReference type="HAMAP" id="MF_00582">
    <property type="entry name" value="UPF0215"/>
    <property type="match status" value="1"/>
</dbReference>
<dbReference type="InterPro" id="IPR002802">
    <property type="entry name" value="Endo_dU"/>
</dbReference>
<dbReference type="NCBIfam" id="NF001977">
    <property type="entry name" value="PRK00766.1"/>
    <property type="match status" value="1"/>
</dbReference>
<dbReference type="PANTHER" id="PTHR39518">
    <property type="entry name" value="UPF0215 PROTEIN MJ1150"/>
    <property type="match status" value="1"/>
</dbReference>
<dbReference type="PANTHER" id="PTHR39518:SF2">
    <property type="entry name" value="UPF0215 PROTEIN MJ1150"/>
    <property type="match status" value="1"/>
</dbReference>
<dbReference type="Pfam" id="PF01949">
    <property type="entry name" value="DUF99"/>
    <property type="match status" value="1"/>
</dbReference>
<dbReference type="PIRSF" id="PIRSF006380">
    <property type="entry name" value="UCP006380"/>
    <property type="match status" value="1"/>
</dbReference>
<protein>
    <recommendedName>
        <fullName evidence="1">UPF0215 protein MTH_1316</fullName>
    </recommendedName>
</protein>
<reference key="1">
    <citation type="journal article" date="1997" name="J. Bacteriol.">
        <title>Complete genome sequence of Methanobacterium thermoautotrophicum deltaH: functional analysis and comparative genomics.</title>
        <authorList>
            <person name="Smith D.R."/>
            <person name="Doucette-Stamm L.A."/>
            <person name="Deloughery C."/>
            <person name="Lee H.-M."/>
            <person name="Dubois J."/>
            <person name="Aldredge T."/>
            <person name="Bashirzadeh R."/>
            <person name="Blakely D."/>
            <person name="Cook R."/>
            <person name="Gilbert K."/>
            <person name="Harrison D."/>
            <person name="Hoang L."/>
            <person name="Keagle P."/>
            <person name="Lumm W."/>
            <person name="Pothier B."/>
            <person name="Qiu D."/>
            <person name="Spadafora R."/>
            <person name="Vicare R."/>
            <person name="Wang Y."/>
            <person name="Wierzbowski J."/>
            <person name="Gibson R."/>
            <person name="Jiwani N."/>
            <person name="Caruso A."/>
            <person name="Bush D."/>
            <person name="Safer H."/>
            <person name="Patwell D."/>
            <person name="Prabhakar S."/>
            <person name="McDougall S."/>
            <person name="Shimer G."/>
            <person name="Goyal A."/>
            <person name="Pietrovski S."/>
            <person name="Church G.M."/>
            <person name="Daniels C.J."/>
            <person name="Mao J.-I."/>
            <person name="Rice P."/>
            <person name="Noelling J."/>
            <person name="Reeve J.N."/>
        </authorList>
    </citation>
    <scope>NUCLEOTIDE SEQUENCE [LARGE SCALE GENOMIC DNA]</scope>
    <source>
        <strain>ATCC 29096 / DSM 1053 / JCM 10044 / NBRC 100330 / Delta H</strain>
    </source>
</reference>
<feature type="chain" id="PRO_0000149236" description="UPF0215 protein MTH_1316">
    <location>
        <begin position="1"/>
        <end position="204"/>
    </location>
</feature>
<proteinExistence type="inferred from homology"/>
<organism>
    <name type="scientific">Methanothermobacter thermautotrophicus (strain ATCC 29096 / DSM 1053 / JCM 10044 / NBRC 100330 / Delta H)</name>
    <name type="common">Methanobacterium thermoautotrophicum</name>
    <dbReference type="NCBI Taxonomy" id="187420"/>
    <lineage>
        <taxon>Archaea</taxon>
        <taxon>Methanobacteriati</taxon>
        <taxon>Methanobacteriota</taxon>
        <taxon>Methanomada group</taxon>
        <taxon>Methanobacteria</taxon>
        <taxon>Methanobacteriales</taxon>
        <taxon>Methanobacteriaceae</taxon>
        <taxon>Methanothermobacter</taxon>
    </lineage>
</organism>
<comment type="similarity">
    <text evidence="1">Belongs to the UPF0215 family.</text>
</comment>
<evidence type="ECO:0000255" key="1">
    <source>
        <dbReference type="HAMAP-Rule" id="MF_00582"/>
    </source>
</evidence>
<accession>O27371</accession>
<sequence>MNYFSMENHNFRQIKSEIRILGIDDAPFTPRSEEDVLLVGTVFRGGQWLDGVLTTTVRVDGDDATERIIEMVNGSRHLNQLRVIMLDGLTFGGFNVVDIVELSERTGLPVIVVVRKHPDMERIKRALKHRFSDWKARWRSIERAGRIHRVESREPLYIQTAGIEPDDAAEIVRISTTRSSIPEPLRAAHIIASGVTLGESRGSA</sequence>
<gene>
    <name type="ordered locus">MTH_1316</name>
</gene>